<evidence type="ECO:0000250" key="1">
    <source>
        <dbReference type="UniProtKB" id="Q5BH31"/>
    </source>
</evidence>
<evidence type="ECO:0000250" key="2">
    <source>
        <dbReference type="UniProtKB" id="Q988B9"/>
    </source>
</evidence>
<evidence type="ECO:0000255" key="3"/>
<evidence type="ECO:0000269" key="4">
    <source>
    </source>
</evidence>
<evidence type="ECO:0000269" key="5">
    <source>
    </source>
</evidence>
<evidence type="ECO:0000269" key="6">
    <source>
    </source>
</evidence>
<evidence type="ECO:0000303" key="7">
    <source>
    </source>
</evidence>
<evidence type="ECO:0000305" key="8"/>
<sequence length="333" mass="36853">MDDKGGYRQINSAFNACAFDDILGSQMAQLPELPDVEQLTPRVLRILGQNPGKFTFQGTNTYVIGTGRQRLIIDTGGGEADWASLINDTLKARGITIARVLLTHWHGDHTGGVADLIRLYPDLEHHIYKNQPDRGQQNIYHAQTFDVEGATVRALHTPGHSEDHMCFILEEEGEPRAMFTGDTILGHGTSTMEDLSSFMDSLQNITDQQCEVGYSAHGAVIENLPLKMVQELRHKTRREAQVLTALASYASRGQRSLTTSELVAEIYGQSLNAETRAFALEPFIDQVLRKLAGDGKVGFEVRAGQRKWFIMDMMQGSIRPARSGSAREILVAA</sequence>
<dbReference type="EC" id="3.1.2.-" evidence="5"/>
<dbReference type="SMR" id="P0CU68"/>
<dbReference type="OMA" id="QLVTAMH"/>
<dbReference type="OrthoDB" id="17458at2759"/>
<dbReference type="GO" id="GO:0016787">
    <property type="term" value="F:hydrolase activity"/>
    <property type="evidence" value="ECO:0007669"/>
    <property type="project" value="UniProtKB-KW"/>
</dbReference>
<dbReference type="GO" id="GO:0046872">
    <property type="term" value="F:metal ion binding"/>
    <property type="evidence" value="ECO:0007669"/>
    <property type="project" value="UniProtKB-KW"/>
</dbReference>
<dbReference type="GO" id="GO:0044550">
    <property type="term" value="P:secondary metabolite biosynthetic process"/>
    <property type="evidence" value="ECO:0007669"/>
    <property type="project" value="TreeGrafter"/>
</dbReference>
<dbReference type="CDD" id="cd07722">
    <property type="entry name" value="LACTB2-like_MBL-fold"/>
    <property type="match status" value="1"/>
</dbReference>
<dbReference type="FunFam" id="3.60.15.10:FF:000041">
    <property type="entry name" value="Metallo-beta-lactamase domain protein"/>
    <property type="match status" value="1"/>
</dbReference>
<dbReference type="Gene3D" id="3.60.15.10">
    <property type="entry name" value="Ribonuclease Z/Hydroxyacylglutathione hydrolase-like"/>
    <property type="match status" value="1"/>
</dbReference>
<dbReference type="Gene3D" id="1.10.10.10">
    <property type="entry name" value="Winged helix-like DNA-binding domain superfamily/Winged helix DNA-binding domain"/>
    <property type="match status" value="1"/>
</dbReference>
<dbReference type="InterPro" id="IPR047921">
    <property type="entry name" value="LACTB2-like_MBL-fold"/>
</dbReference>
<dbReference type="InterPro" id="IPR001279">
    <property type="entry name" value="Metallo-B-lactamas"/>
</dbReference>
<dbReference type="InterPro" id="IPR036866">
    <property type="entry name" value="RibonucZ/Hydroxyglut_hydro"/>
</dbReference>
<dbReference type="InterPro" id="IPR050662">
    <property type="entry name" value="Sec-metab_biosynth-thioest"/>
</dbReference>
<dbReference type="InterPro" id="IPR036388">
    <property type="entry name" value="WH-like_DNA-bd_sf"/>
</dbReference>
<dbReference type="PANTHER" id="PTHR23131:SF3">
    <property type="entry name" value="ATROCHRYSONE CARBOXYL ACP THIOESTERASE"/>
    <property type="match status" value="1"/>
</dbReference>
<dbReference type="PANTHER" id="PTHR23131">
    <property type="entry name" value="ENDORIBONUCLEASE LACTB2"/>
    <property type="match status" value="1"/>
</dbReference>
<dbReference type="Pfam" id="PF00753">
    <property type="entry name" value="Lactamase_B"/>
    <property type="match status" value="1"/>
</dbReference>
<dbReference type="SMART" id="SM00849">
    <property type="entry name" value="Lactamase_B"/>
    <property type="match status" value="1"/>
</dbReference>
<dbReference type="SUPFAM" id="SSF56281">
    <property type="entry name" value="Metallo-hydrolase/oxidoreductase"/>
    <property type="match status" value="1"/>
</dbReference>
<gene>
    <name evidence="7" type="primary">claF</name>
    <name type="ORF">Clafu184396</name>
</gene>
<proteinExistence type="evidence at protein level"/>
<feature type="chain" id="PRO_0000445888" description="Atrochrysone carboxyl ACP thioesterase">
    <location>
        <begin position="1"/>
        <end position="333"/>
    </location>
</feature>
<feature type="active site" description="Proton donor/acceptor" evidence="3">
    <location>
        <position position="108"/>
    </location>
</feature>
<feature type="binding site" evidence="2">
    <location>
        <position position="104"/>
    </location>
    <ligand>
        <name>Zn(2+)</name>
        <dbReference type="ChEBI" id="CHEBI:29105"/>
        <label>1</label>
        <note>catalytic</note>
    </ligand>
</feature>
<feature type="binding site" evidence="2">
    <location>
        <position position="106"/>
    </location>
    <ligand>
        <name>Zn(2+)</name>
        <dbReference type="ChEBI" id="CHEBI:29105"/>
        <label>1</label>
        <note>catalytic</note>
    </ligand>
</feature>
<feature type="binding site" evidence="2">
    <location>
        <position position="108"/>
    </location>
    <ligand>
        <name>Zn(2+)</name>
        <dbReference type="ChEBI" id="CHEBI:29105"/>
        <label>2</label>
        <note>catalytic</note>
    </ligand>
</feature>
<feature type="binding site" evidence="2">
    <location>
        <position position="109"/>
    </location>
    <ligand>
        <name>Zn(2+)</name>
        <dbReference type="ChEBI" id="CHEBI:29105"/>
        <label>2</label>
        <note>catalytic</note>
    </ligand>
</feature>
<keyword id="KW-0378">Hydrolase</keyword>
<keyword id="KW-0479">Metal-binding</keyword>
<keyword id="KW-0862">Zinc</keyword>
<protein>
    <recommendedName>
        <fullName evidence="7">Atrochrysone carboxyl ACP thioesterase</fullName>
        <shortName evidence="1">ACTE</shortName>
        <ecNumber evidence="5">3.1.2.-</ecNumber>
    </recommendedName>
    <alternativeName>
        <fullName evidence="7">Cladofulvin biosynthesis cluster protein F</fullName>
    </alternativeName>
</protein>
<organism>
    <name type="scientific">Passalora fulva</name>
    <name type="common">Tomato leaf mold</name>
    <name type="synonym">Cladosporium fulvum</name>
    <dbReference type="NCBI Taxonomy" id="5499"/>
    <lineage>
        <taxon>Eukaryota</taxon>
        <taxon>Fungi</taxon>
        <taxon>Dikarya</taxon>
        <taxon>Ascomycota</taxon>
        <taxon>Pezizomycotina</taxon>
        <taxon>Dothideomycetes</taxon>
        <taxon>Dothideomycetidae</taxon>
        <taxon>Mycosphaerellales</taxon>
        <taxon>Mycosphaerellaceae</taxon>
        <taxon>Fulvia</taxon>
    </lineage>
</organism>
<name>CLAF_PASFU</name>
<accession>P0CU68</accession>
<reference key="1">
    <citation type="journal article" date="2014" name="PLoS ONE">
        <title>Secondary metabolism and biotrophic lifestyle in the tomato pathogen Cladosporium fulvum.</title>
        <authorList>
            <person name="Collemare J."/>
            <person name="Griffiths S."/>
            <person name="Iida Y."/>
            <person name="Karimi Jashni M."/>
            <person name="Battaglia E."/>
            <person name="Cox R.J."/>
            <person name="de Wit P.J."/>
        </authorList>
    </citation>
    <scope>IDENTIFICATION</scope>
    <scope>FUNCTION</scope>
    <scope>INDUCTION</scope>
</reference>
<reference key="2">
    <citation type="journal article" date="2016" name="Proc. Natl. Acad. Sci. U.S.A.">
        <title>Elucidation of cladofulvin biosynthesis reveals a cytochrome P450 monooxygenase required for anthraquinone dimerization.</title>
        <authorList>
            <person name="Griffiths S."/>
            <person name="Mesarich C.H."/>
            <person name="Saccomanno B."/>
            <person name="Vaisberg A."/>
            <person name="De Wit P.J."/>
            <person name="Cox R."/>
            <person name="Collemare J."/>
        </authorList>
    </citation>
    <scope>INDUCTION</scope>
    <scope>FUNCTION</scope>
    <scope>CATALYTIC ACTIVITY</scope>
    <scope>PATHWAY</scope>
</reference>
<reference key="3">
    <citation type="journal article" date="2018" name="Mol. Plant Pathol.">
        <title>Down-regulation of cladofulvin biosynthesis is required for biotrophic growth of Cladosporium fulvum on tomato.</title>
        <authorList>
            <person name="Griffiths S."/>
            <person name="Mesarich C.H."/>
            <person name="Overdijk E.J.R."/>
            <person name="Saccomanno B."/>
            <person name="de Wit P.J.G.M."/>
            <person name="Collemare J."/>
        </authorList>
    </citation>
    <scope>INDUCTION</scope>
</reference>
<comment type="function">
    <text evidence="4 5">Atrochrysone carboxyl ACP thioesterase; part of the gene cluster that mediates the biosynthesis of the bianthraquinone cladofulvin, a conidial pigment not required for virulence but that plays a role in fitness and resistance to environmental stresses including UV light and low-temperature stress (PubMed:24465762, PubMed:27274078). The pathway begins with the synthesis of atrochrysone thioester by the polyketide synthase (PKS) claG. The atrochrysone carboxyl ACP thioesterase claF then breaks the thioester bond and releases the atrochrysone carboxylic acid from claG (PubMed:27274078). This compound is decarboxylated by claH to yield emodin, which is further converted to chrysophanol hydroquinone by the reductase claC and the dehydratase claB (PubMed:27274078). The cytochrome P450 monooxygenase claM then catalyzes the dimerization of nataloe-emodin to cladofulvin (PubMed:27274078).</text>
</comment>
<comment type="catalytic activity">
    <reaction evidence="5">
        <text>atrochrysone carboxyl-[ACP] + H2O = atrochrysone carboxylate + holo-[ACP] + H(+)</text>
        <dbReference type="Rhea" id="RHEA:64236"/>
        <dbReference type="Rhea" id="RHEA-COMP:9685"/>
        <dbReference type="Rhea" id="RHEA-COMP:16552"/>
        <dbReference type="ChEBI" id="CHEBI:15377"/>
        <dbReference type="ChEBI" id="CHEBI:15378"/>
        <dbReference type="ChEBI" id="CHEBI:64479"/>
        <dbReference type="ChEBI" id="CHEBI:149712"/>
        <dbReference type="ChEBI" id="CHEBI:149713"/>
    </reaction>
    <physiologicalReaction direction="left-to-right" evidence="5">
        <dbReference type="Rhea" id="RHEA:64237"/>
    </physiologicalReaction>
</comment>
<comment type="cofactor">
    <cofactor evidence="2">
        <name>Zn(2+)</name>
        <dbReference type="ChEBI" id="CHEBI:29105"/>
    </cofactor>
    <text evidence="2">Binds 2 Zn(2+) ions per subunit.</text>
</comment>
<comment type="pathway">
    <text evidence="5">Pigment biosynthesis.</text>
</comment>
<comment type="induction">
    <text evidence="4 6">Expression is down-regulated during biotrophic growth within tomato leaves (PubMed:27997759). The expression is induced at later stages of infection when conidiophores emerge from the plant and produce conidia (PubMed:24465762).</text>
</comment>
<comment type="similarity">
    <text evidence="8">Belongs to the metallo-beta-lactamase superfamily.</text>
</comment>